<proteinExistence type="inferred from homology"/>
<gene>
    <name evidence="1" type="primary">bshC</name>
    <name type="ordered locus">BCB4264_A4020</name>
</gene>
<keyword id="KW-0175">Coiled coil</keyword>
<keyword id="KW-0436">Ligase</keyword>
<name>BSHC_BACC4</name>
<organism>
    <name type="scientific">Bacillus cereus (strain B4264)</name>
    <dbReference type="NCBI Taxonomy" id="405532"/>
    <lineage>
        <taxon>Bacteria</taxon>
        <taxon>Bacillati</taxon>
        <taxon>Bacillota</taxon>
        <taxon>Bacilli</taxon>
        <taxon>Bacillales</taxon>
        <taxon>Bacillaceae</taxon>
        <taxon>Bacillus</taxon>
        <taxon>Bacillus cereus group</taxon>
    </lineage>
</organism>
<comment type="function">
    <text evidence="1">Involved in bacillithiol (BSH) biosynthesis. May catalyze the last step of the pathway, the addition of cysteine to glucosamine malate (GlcN-Mal) to generate BSH.</text>
</comment>
<comment type="similarity">
    <text evidence="1">Belongs to the BshC family.</text>
</comment>
<reference key="1">
    <citation type="submission" date="2008-10" db="EMBL/GenBank/DDBJ databases">
        <title>Genome sequence of Bacillus cereus B4264.</title>
        <authorList>
            <person name="Dodson R.J."/>
            <person name="Durkin A.S."/>
            <person name="Rosovitz M.J."/>
            <person name="Rasko D.A."/>
            <person name="Hoffmaster A."/>
            <person name="Ravel J."/>
            <person name="Sutton G."/>
        </authorList>
    </citation>
    <scope>NUCLEOTIDE SEQUENCE [LARGE SCALE GENOMIC DNA]</scope>
    <source>
        <strain>B4264</strain>
    </source>
</reference>
<feature type="chain" id="PRO_0000378212" description="Putative cysteine ligase BshC">
    <location>
        <begin position="1"/>
        <end position="538"/>
    </location>
</feature>
<feature type="coiled-coil region" evidence="1">
    <location>
        <begin position="248"/>
        <end position="268"/>
    </location>
</feature>
<accession>B7H6Q5</accession>
<protein>
    <recommendedName>
        <fullName evidence="1">Putative cysteine ligase BshC</fullName>
        <ecNumber evidence="1">6.-.-.-</ecNumber>
    </recommendedName>
</protein>
<sequence>MEIKEISVPQQGVVADYMNGKKEIQSCFDYMLTEDAFKQRLHDLREREFFRQDLVAHLLEYNTKLQAGESTLQNVKALGDENTYVVIAGQQAGLLTGPLYTIHKVISILQLAKEKEESLGVKVVPVFWIAGEDHDMDEINHTFVAKNKKMKKTIFYDRNPKKASASESELSVEDCRNWIEEIFKTYPETNFTKDVLKFVDDALKKSNTYVDFFAHLITKIFANSGLILVDSHHPELRKLEIPFFKRIISKYKEVQEGLRNQQEVIKELGYKPIIETKSHAVHIFMEIDNERVLLEDQQGKFVGKDGAHSFSYEELIEEMERNPARFSNNVVTRPLMQEYVFPTLAFIGGPGELAYWSELQQVFHTVGFQMPPVVPRLTITYVERDIATDLFDLQLRESDPFLNDVDKLRENWLSNQIEEPIDDHFEKAKKEIADIHTSLQRFVKKIEPGLGAFAGKNELKINEQIELLERMLKRNVEKKYEVQLNKFRRIQFALRPLGAPQERVWNVCYYLNQFGLDFVDRVMENSFSWDGKHHVIKL</sequence>
<evidence type="ECO:0000255" key="1">
    <source>
        <dbReference type="HAMAP-Rule" id="MF_01867"/>
    </source>
</evidence>
<dbReference type="EC" id="6.-.-.-" evidence="1"/>
<dbReference type="EMBL" id="CP001176">
    <property type="protein sequence ID" value="ACK63708.1"/>
    <property type="molecule type" value="Genomic_DNA"/>
</dbReference>
<dbReference type="RefSeq" id="WP_000403039.1">
    <property type="nucleotide sequence ID" value="NC_011725.1"/>
</dbReference>
<dbReference type="SMR" id="B7H6Q5"/>
<dbReference type="KEGG" id="bcb:BCB4264_A4020"/>
<dbReference type="HOGENOM" id="CLU_022249_1_0_9"/>
<dbReference type="Proteomes" id="UP000007096">
    <property type="component" value="Chromosome"/>
</dbReference>
<dbReference type="GO" id="GO:0016874">
    <property type="term" value="F:ligase activity"/>
    <property type="evidence" value="ECO:0007669"/>
    <property type="project" value="UniProtKB-UniRule"/>
</dbReference>
<dbReference type="HAMAP" id="MF_01867">
    <property type="entry name" value="BshC"/>
    <property type="match status" value="1"/>
</dbReference>
<dbReference type="InterPro" id="IPR011199">
    <property type="entry name" value="Bacillithiol_biosynth_BshC"/>
</dbReference>
<dbReference type="InterPro" id="IPR055399">
    <property type="entry name" value="CC_BshC"/>
</dbReference>
<dbReference type="InterPro" id="IPR055398">
    <property type="entry name" value="Rossmann-like_BshC"/>
</dbReference>
<dbReference type="NCBIfam" id="TIGR03998">
    <property type="entry name" value="thiol_BshC"/>
    <property type="match status" value="1"/>
</dbReference>
<dbReference type="Pfam" id="PF24850">
    <property type="entry name" value="CC_BshC"/>
    <property type="match status" value="1"/>
</dbReference>
<dbReference type="Pfam" id="PF10079">
    <property type="entry name" value="Rossmann-like_BshC"/>
    <property type="match status" value="1"/>
</dbReference>
<dbReference type="PIRSF" id="PIRSF012535">
    <property type="entry name" value="UCP012535"/>
    <property type="match status" value="1"/>
</dbReference>